<feature type="chain" id="PRO_0000209839" description="Squalene monooxygenase">
    <location>
        <begin position="1"/>
        <end position="572"/>
    </location>
</feature>
<feature type="topological domain" description="Cytoplasmic" evidence="2">
    <location>
        <begin position="1"/>
        <end position="19"/>
    </location>
</feature>
<feature type="intramembrane region" evidence="2">
    <location>
        <begin position="20"/>
        <end position="40"/>
    </location>
</feature>
<feature type="topological domain" description="Cytoplasmic" evidence="2">
    <location>
        <begin position="41"/>
        <end position="572"/>
    </location>
</feature>
<feature type="region of interest" description="Interaction with MARCHF6" evidence="2">
    <location>
        <begin position="1"/>
        <end position="98"/>
    </location>
</feature>
<feature type="region of interest" description="Required for degradation in response to high membrane cholesterol levels" evidence="2">
    <location>
        <begin position="61"/>
        <end position="72"/>
    </location>
</feature>
<feature type="region of interest" description="Sufficient for enzyme activity" evidence="2">
    <location>
        <begin position="116"/>
        <end position="572"/>
    </location>
</feature>
<feature type="region of interest" description="Hydrophobic; mediates interaction with membranes" evidence="2">
    <location>
        <begin position="514"/>
        <end position="572"/>
    </location>
</feature>
<feature type="binding site" evidence="2">
    <location>
        <begin position="131"/>
        <end position="132"/>
    </location>
    <ligand>
        <name>FAD</name>
        <dbReference type="ChEBI" id="CHEBI:57692"/>
    </ligand>
</feature>
<feature type="binding site" evidence="2">
    <location>
        <begin position="151"/>
        <end position="152"/>
    </location>
    <ligand>
        <name>FAD</name>
        <dbReference type="ChEBI" id="CHEBI:57692"/>
    </ligand>
</feature>
<feature type="binding site" evidence="2">
    <location>
        <position position="159"/>
    </location>
    <ligand>
        <name>FAD</name>
        <dbReference type="ChEBI" id="CHEBI:57692"/>
    </ligand>
</feature>
<feature type="binding site" evidence="2">
    <location>
        <position position="232"/>
    </location>
    <ligand>
        <name>FAD</name>
        <dbReference type="ChEBI" id="CHEBI:57692"/>
    </ligand>
</feature>
<feature type="binding site" evidence="2">
    <location>
        <position position="248"/>
    </location>
    <ligand>
        <name>FAD</name>
        <dbReference type="ChEBI" id="CHEBI:57692"/>
    </ligand>
</feature>
<feature type="binding site" evidence="2">
    <location>
        <position position="406"/>
    </location>
    <ligand>
        <name>FAD</name>
        <dbReference type="ChEBI" id="CHEBI:57692"/>
    </ligand>
</feature>
<feature type="binding site" evidence="2">
    <location>
        <position position="419"/>
    </location>
    <ligand>
        <name>FAD</name>
        <dbReference type="ChEBI" id="CHEBI:57692"/>
    </ligand>
</feature>
<feature type="site" description="Important for enzyme activity" evidence="2">
    <location>
        <position position="193"/>
    </location>
</feature>
<reference key="1">
    <citation type="journal article" date="1995" name="Biochim. Biophys. Acta">
        <title>Nucleotide sequence of a cDNA for mouse squalene epoxidase.</title>
        <authorList>
            <person name="Kosuga K."/>
            <person name="Hata S."/>
            <person name="Osumi T."/>
            <person name="Sakakibara J."/>
            <person name="Ono T."/>
        </authorList>
    </citation>
    <scope>NUCLEOTIDE SEQUENCE [MRNA]</scope>
    <scope>TISSUE SPECIFICITY</scope>
    <source>
        <strain>C57BL/6 X CBA</strain>
        <tissue>Liver</tissue>
    </source>
</reference>
<reference key="2">
    <citation type="journal article" date="2004" name="Genome Res.">
        <title>The status, quality, and expansion of the NIH full-length cDNA project: the Mammalian Gene Collection (MGC).</title>
        <authorList>
            <consortium name="The MGC Project Team"/>
        </authorList>
    </citation>
    <scope>NUCLEOTIDE SEQUENCE [LARGE SCALE MRNA]</scope>
    <source>
        <strain>C57BL/6J</strain>
        <strain>NMRI</strain>
        <tissue>Brain</tissue>
        <tissue>Mammary gland</tissue>
    </source>
</reference>
<keyword id="KW-0256">Endoplasmic reticulum</keyword>
<keyword id="KW-0274">FAD</keyword>
<keyword id="KW-0285">Flavoprotein</keyword>
<keyword id="KW-0443">Lipid metabolism</keyword>
<keyword id="KW-0472">Membrane</keyword>
<keyword id="KW-0492">Microsome</keyword>
<keyword id="KW-0560">Oxidoreductase</keyword>
<keyword id="KW-1185">Reference proteome</keyword>
<keyword id="KW-0832">Ubl conjugation</keyword>
<organism>
    <name type="scientific">Mus musculus</name>
    <name type="common">Mouse</name>
    <dbReference type="NCBI Taxonomy" id="10090"/>
    <lineage>
        <taxon>Eukaryota</taxon>
        <taxon>Metazoa</taxon>
        <taxon>Chordata</taxon>
        <taxon>Craniata</taxon>
        <taxon>Vertebrata</taxon>
        <taxon>Euteleostomi</taxon>
        <taxon>Mammalia</taxon>
        <taxon>Eutheria</taxon>
        <taxon>Euarchontoglires</taxon>
        <taxon>Glires</taxon>
        <taxon>Rodentia</taxon>
        <taxon>Myomorpha</taxon>
        <taxon>Muroidea</taxon>
        <taxon>Muridae</taxon>
        <taxon>Murinae</taxon>
        <taxon>Mus</taxon>
        <taxon>Mus</taxon>
    </lineage>
</organism>
<sequence length="572" mass="63770">MWTFLGIATFTYFYKKCGDVTLANKELLLCVLVFLSLGLVLSYRCRHRHGGLLGRHQSGAQFAAFSDILSALPLIGFFWAKSPESEKKEQLESKKCRKEIGLSETTLTGAATSVSTSFVTDPEVIIVGSGVLGSALAAVLSRDGRKVTVIERDLKEPDRIVGELLQPGGYRVLQELGLGDTVEGLNAHHIHGYIVHDYESRSEVQIPYPLSETNQVQSGIAFHHGRFIMSLRKAAMAEPNVKFIEGVVLQLLEEDDAVIGVQYKDKETGDTKELHAPLTVVADGLFSKFRKSLISSKVSVSSHFVGFLMKDAPQFKPNFAELVLVNPSPVLIYQISSSETRVLVDIRGELPRNLREYMAEQIYPQLPEHLKESFLEASQNGRLRTMPASFLPPSSVNKRGVLILGDAYNLRHPLTGGGMTVALKDIKLWRQLLKDIPDLYDDAAIFQAKKSFFWSRKRTHSFVVNVLAQALYELFSATDDSLHQLRKACFLYFKLGGECVTGPVGLLSILSPHPLVLIRHFFSVAIYATYFCFKSEPWATKPRALFSSGAVLYKACSILFPLIYSEMKYLVH</sequence>
<accession>P52019</accession>
<comment type="function">
    <text evidence="1">Catalyzes the stereospecific oxidation of squalene to (S)-2,3-epoxysqualene, and is considered to be a rate-limiting enzyme in steroid biosynthesis.</text>
</comment>
<comment type="catalytic activity">
    <reaction evidence="1">
        <text>squalene + reduced [NADPH--hemoprotein reductase] + O2 = (S)-2,3-epoxysqualene + oxidized [NADPH--hemoprotein reductase] + H2O + H(+)</text>
        <dbReference type="Rhea" id="RHEA:25282"/>
        <dbReference type="Rhea" id="RHEA-COMP:11964"/>
        <dbReference type="Rhea" id="RHEA-COMP:11965"/>
        <dbReference type="ChEBI" id="CHEBI:15377"/>
        <dbReference type="ChEBI" id="CHEBI:15378"/>
        <dbReference type="ChEBI" id="CHEBI:15379"/>
        <dbReference type="ChEBI" id="CHEBI:15440"/>
        <dbReference type="ChEBI" id="CHEBI:15441"/>
        <dbReference type="ChEBI" id="CHEBI:57618"/>
        <dbReference type="ChEBI" id="CHEBI:58210"/>
        <dbReference type="EC" id="1.14.14.17"/>
    </reaction>
</comment>
<comment type="cofactor">
    <cofactor evidence="2">
        <name>FAD</name>
        <dbReference type="ChEBI" id="CHEBI:57692"/>
    </cofactor>
</comment>
<comment type="pathway">
    <text evidence="2">Terpene metabolism; lanosterol biosynthesis; lanosterol from farnesyl diphosphate: step 2/3.</text>
</comment>
<comment type="subunit">
    <text evidence="2">Interacts (via N-terminal domain) with MARCHF6. Interacts with SMIM22; this interaction modulates lipid droplet formation.</text>
</comment>
<comment type="subcellular location">
    <subcellularLocation>
        <location evidence="1">Microsome membrane</location>
        <topology evidence="2">Peripheral membrane protein</topology>
    </subcellularLocation>
    <subcellularLocation>
        <location evidence="2">Endoplasmic reticulum membrane</location>
        <topology evidence="2">Peripheral membrane protein</topology>
    </subcellularLocation>
</comment>
<comment type="tissue specificity">
    <text evidence="3">Detected in liver.</text>
</comment>
<comment type="domain">
    <text evidence="2">The C-terminal hydrophobic region contains two helices that mediate interaction with membranes. Contrary to predictions, this region does not contain transmembrane helices.</text>
</comment>
<comment type="domain">
    <text evidence="2">The N-terminal region mediates interaction with MARCHF6, leading to SQLE ubiquitination and proteasomal degradation when cholosterol levels are high. The first part of the N-terminal region contains a hydrophobic region that inserts into the membrane; contrary to predictions, there are no transmembrane helices. The second part contains a region that can form an amphipathic region that associates with membranes. This region is ejected from the membrane by high cholesterol levels and becomes disordered in an aqueous environment. This is critical for cholesterol-dependent proteasomal degradation. Additional parts of the N-terminal region are predicted to be disordered and contribute to flagging the protein for proteasomal degradation already under basal conditions.</text>
</comment>
<comment type="PTM">
    <text evidence="2">Ubiquitinated by MARCHF6 in response to high cholesterol levels in intracellular membranes, leading to proteasomal degradation.</text>
</comment>
<comment type="similarity">
    <text evidence="5">Belongs to the squalene monooxygenase family.</text>
</comment>
<name>ERG1_MOUSE</name>
<dbReference type="EC" id="1.14.14.17" evidence="1"/>
<dbReference type="EMBL" id="D42048">
    <property type="protein sequence ID" value="BAA07649.1"/>
    <property type="molecule type" value="mRNA"/>
</dbReference>
<dbReference type="EMBL" id="BC042781">
    <property type="protein sequence ID" value="AAH42781.1"/>
    <property type="molecule type" value="mRNA"/>
</dbReference>
<dbReference type="EMBL" id="BC056361">
    <property type="protein sequence ID" value="AAH56361.1"/>
    <property type="molecule type" value="mRNA"/>
</dbReference>
<dbReference type="CCDS" id="CCDS27497.1"/>
<dbReference type="PIR" id="S52113">
    <property type="entry name" value="S52113"/>
</dbReference>
<dbReference type="RefSeq" id="NP_033296.1">
    <property type="nucleotide sequence ID" value="NM_009270.3"/>
</dbReference>
<dbReference type="SMR" id="P52019"/>
<dbReference type="BioGRID" id="203488">
    <property type="interactions" value="1"/>
</dbReference>
<dbReference type="FunCoup" id="P52019">
    <property type="interactions" value="773"/>
</dbReference>
<dbReference type="STRING" id="10090.ENSMUSP00000022977"/>
<dbReference type="iPTMnet" id="P52019"/>
<dbReference type="PhosphoSitePlus" id="P52019"/>
<dbReference type="SwissPalm" id="P52019"/>
<dbReference type="PaxDb" id="10090-ENSMUSP00000022977"/>
<dbReference type="PeptideAtlas" id="P52019"/>
<dbReference type="ProteomicsDB" id="275941"/>
<dbReference type="Pumba" id="P52019"/>
<dbReference type="Antibodypedia" id="27121">
    <property type="antibodies" value="162 antibodies from 27 providers"/>
</dbReference>
<dbReference type="DNASU" id="20775"/>
<dbReference type="Ensembl" id="ENSMUST00000022977.14">
    <property type="protein sequence ID" value="ENSMUSP00000022977.8"/>
    <property type="gene ID" value="ENSMUSG00000022351.15"/>
</dbReference>
<dbReference type="GeneID" id="20775"/>
<dbReference type="KEGG" id="mmu:20775"/>
<dbReference type="UCSC" id="uc007vxq.1">
    <property type="organism name" value="mouse"/>
</dbReference>
<dbReference type="AGR" id="MGI:109296"/>
<dbReference type="CTD" id="6713"/>
<dbReference type="MGI" id="MGI:109296">
    <property type="gene designation" value="Sqle"/>
</dbReference>
<dbReference type="VEuPathDB" id="HostDB:ENSMUSG00000022351"/>
<dbReference type="eggNOG" id="KOG1298">
    <property type="taxonomic scope" value="Eukaryota"/>
</dbReference>
<dbReference type="GeneTree" id="ENSGT00390000011759"/>
<dbReference type="InParanoid" id="P52019"/>
<dbReference type="OMA" id="AKRTFYW"/>
<dbReference type="OrthoDB" id="1678617at2759"/>
<dbReference type="PhylomeDB" id="P52019"/>
<dbReference type="TreeFam" id="TF331056"/>
<dbReference type="Reactome" id="R-MMU-191273">
    <property type="pathway name" value="Cholesterol biosynthesis"/>
</dbReference>
<dbReference type="UniPathway" id="UPA00767">
    <property type="reaction ID" value="UER00752"/>
</dbReference>
<dbReference type="BioGRID-ORCS" id="20775">
    <property type="hits" value="6 hits in 80 CRISPR screens"/>
</dbReference>
<dbReference type="ChiTaRS" id="Sqle">
    <property type="organism name" value="mouse"/>
</dbReference>
<dbReference type="PRO" id="PR:P52019"/>
<dbReference type="Proteomes" id="UP000000589">
    <property type="component" value="Chromosome 15"/>
</dbReference>
<dbReference type="RNAct" id="P52019">
    <property type="molecule type" value="protein"/>
</dbReference>
<dbReference type="Bgee" id="ENSMUSG00000022351">
    <property type="expression patterns" value="Expressed in undifferentiated genital tubercle and 258 other cell types or tissues"/>
</dbReference>
<dbReference type="ExpressionAtlas" id="P52019">
    <property type="expression patterns" value="baseline and differential"/>
</dbReference>
<dbReference type="GO" id="GO:0005789">
    <property type="term" value="C:endoplasmic reticulum membrane"/>
    <property type="evidence" value="ECO:0007669"/>
    <property type="project" value="UniProtKB-SubCell"/>
</dbReference>
<dbReference type="GO" id="GO:0043231">
    <property type="term" value="C:intracellular membrane-bounded organelle"/>
    <property type="evidence" value="ECO:0000250"/>
    <property type="project" value="UniProtKB"/>
</dbReference>
<dbReference type="GO" id="GO:0016020">
    <property type="term" value="C:membrane"/>
    <property type="evidence" value="ECO:0000250"/>
    <property type="project" value="UniProtKB"/>
</dbReference>
<dbReference type="GO" id="GO:0071949">
    <property type="term" value="F:FAD binding"/>
    <property type="evidence" value="ECO:0000250"/>
    <property type="project" value="UniProtKB"/>
</dbReference>
<dbReference type="GO" id="GO:0004506">
    <property type="term" value="F:squalene monooxygenase activity"/>
    <property type="evidence" value="ECO:0000250"/>
    <property type="project" value="UniProtKB"/>
</dbReference>
<dbReference type="GO" id="GO:0008203">
    <property type="term" value="P:cholesterol metabolic process"/>
    <property type="evidence" value="ECO:0007669"/>
    <property type="project" value="Ensembl"/>
</dbReference>
<dbReference type="GO" id="GO:0140042">
    <property type="term" value="P:lipid droplet formation"/>
    <property type="evidence" value="ECO:0000250"/>
    <property type="project" value="UniProtKB"/>
</dbReference>
<dbReference type="GO" id="GO:0042127">
    <property type="term" value="P:regulation of cell population proliferation"/>
    <property type="evidence" value="ECO:0000250"/>
    <property type="project" value="UniProtKB"/>
</dbReference>
<dbReference type="GO" id="GO:1904614">
    <property type="term" value="P:response to biphenyl"/>
    <property type="evidence" value="ECO:0007669"/>
    <property type="project" value="Ensembl"/>
</dbReference>
<dbReference type="GO" id="GO:0016126">
    <property type="term" value="P:sterol biosynthetic process"/>
    <property type="evidence" value="ECO:0000250"/>
    <property type="project" value="UniProtKB"/>
</dbReference>
<dbReference type="FunFam" id="3.50.50.60:FF:000104">
    <property type="entry name" value="Squalene monooxygenase"/>
    <property type="match status" value="1"/>
</dbReference>
<dbReference type="Gene3D" id="3.50.50.60">
    <property type="entry name" value="FAD/NAD(P)-binding domain"/>
    <property type="match status" value="1"/>
</dbReference>
<dbReference type="InterPro" id="IPR036188">
    <property type="entry name" value="FAD/NAD-bd_sf"/>
</dbReference>
<dbReference type="InterPro" id="IPR013698">
    <property type="entry name" value="Squalene_epoxidase"/>
</dbReference>
<dbReference type="InterPro" id="IPR040125">
    <property type="entry name" value="Squalene_monox"/>
</dbReference>
<dbReference type="PANTHER" id="PTHR10835">
    <property type="entry name" value="SQUALENE MONOOXYGENASE"/>
    <property type="match status" value="1"/>
</dbReference>
<dbReference type="PANTHER" id="PTHR10835:SF0">
    <property type="entry name" value="SQUALENE MONOOXYGENASE"/>
    <property type="match status" value="1"/>
</dbReference>
<dbReference type="Pfam" id="PF13450">
    <property type="entry name" value="NAD_binding_8"/>
    <property type="match status" value="1"/>
</dbReference>
<dbReference type="Pfam" id="PF08491">
    <property type="entry name" value="SE"/>
    <property type="match status" value="1"/>
</dbReference>
<dbReference type="PRINTS" id="PR00420">
    <property type="entry name" value="RNGMNOXGNASE"/>
</dbReference>
<dbReference type="SUPFAM" id="SSF51905">
    <property type="entry name" value="FAD/NAD(P)-binding domain"/>
    <property type="match status" value="1"/>
</dbReference>
<evidence type="ECO:0000250" key="1">
    <source>
        <dbReference type="UniProtKB" id="P52020"/>
    </source>
</evidence>
<evidence type="ECO:0000250" key="2">
    <source>
        <dbReference type="UniProtKB" id="Q14534"/>
    </source>
</evidence>
<evidence type="ECO:0000269" key="3">
    <source>
    </source>
</evidence>
<evidence type="ECO:0000303" key="4">
    <source>
    </source>
</evidence>
<evidence type="ECO:0000305" key="5"/>
<proteinExistence type="evidence at transcript level"/>
<gene>
    <name type="primary">Sqle</name>
    <name type="synonym">Erg1</name>
</gene>
<protein>
    <recommendedName>
        <fullName>Squalene monooxygenase</fullName>
        <ecNumber evidence="1">1.14.14.17</ecNumber>
    </recommendedName>
    <alternativeName>
        <fullName evidence="4">Squalene epoxidase</fullName>
        <shortName>SE</shortName>
    </alternativeName>
</protein>